<feature type="initiator methionine" description="Removed" evidence="1">
    <location>
        <position position="1"/>
    </location>
</feature>
<feature type="chain" id="PRO_0000158310" description="Histone H4">
    <location>
        <begin position="2"/>
        <end position="103"/>
    </location>
</feature>
<feature type="DNA-binding region">
    <location>
        <begin position="17"/>
        <end position="21"/>
    </location>
</feature>
<feature type="region of interest" description="Disordered" evidence="4">
    <location>
        <begin position="1"/>
        <end position="20"/>
    </location>
</feature>
<feature type="compositionally biased region" description="Gly residues" evidence="4">
    <location>
        <begin position="1"/>
        <end position="14"/>
    </location>
</feature>
<feature type="modified residue" description="N6-acetyl-N6-methyllysine; alternate" evidence="2">
    <location>
        <position position="6"/>
    </location>
</feature>
<feature type="modified residue" description="N6-acetyllysine" evidence="3">
    <location>
        <position position="6"/>
    </location>
</feature>
<feature type="modified residue" description="N6-acetyl-N6-methyllysine; alternate" evidence="2">
    <location>
        <position position="13"/>
    </location>
</feature>
<feature type="modified residue" description="N6-acetyllysine" evidence="3">
    <location>
        <position position="13"/>
    </location>
</feature>
<feature type="modified residue" description="N6-succinyllysine" evidence="3">
    <location>
        <position position="32"/>
    </location>
</feature>
<feature type="modified residue" description="N6-succinyllysine" evidence="3">
    <location>
        <position position="78"/>
    </location>
</feature>
<feature type="modified residue" description="N6-succinyllysine" evidence="3">
    <location>
        <position position="80"/>
    </location>
</feature>
<feature type="modified residue" description="Phosphothreonine" evidence="3">
    <location>
        <position position="81"/>
    </location>
</feature>
<feature type="modified residue" description="Phosphothreonine" evidence="3">
    <location>
        <position position="83"/>
    </location>
</feature>
<feature type="modified residue" description="N6-succinyllysine" evidence="3">
    <location>
        <position position="92"/>
    </location>
</feature>
<proteinExistence type="inferred from homology"/>
<evidence type="ECO:0000250" key="1"/>
<evidence type="ECO:0000250" key="2">
    <source>
        <dbReference type="UniProtKB" id="P62805"/>
    </source>
</evidence>
<evidence type="ECO:0000250" key="3">
    <source>
        <dbReference type="UniProtKB" id="P84040"/>
    </source>
</evidence>
<evidence type="ECO:0000256" key="4">
    <source>
        <dbReference type="SAM" id="MobiDB-lite"/>
    </source>
</evidence>
<evidence type="ECO:0000305" key="5"/>
<comment type="function">
    <text>Core component of nucleosome. Nucleosomes wrap and compact DNA into chromatin, limiting DNA accessibility to the cellular machineries which require DNA as a template. Histones thereby play a central role in transcription regulation, DNA repair, DNA replication and chromosomal stability. DNA accessibility is regulated via a complex set of post-translational modifications of histones, also called histone code, and nucleosome remodeling.</text>
</comment>
<comment type="subunit">
    <text>The nucleosome is a histone octamer containing two molecules each of H2A, H2B, H3 and H4 assembled in one H3-H4 heterotetramer and two H2A-H2B heterodimers. The octamer wraps approximately 147 bp of DNA.</text>
</comment>
<comment type="subcellular location">
    <subcellularLocation>
        <location evidence="1">Nucleus</location>
    </subcellularLocation>
    <subcellularLocation>
        <location evidence="1">Chromosome</location>
    </subcellularLocation>
</comment>
<comment type="PTM">
    <text evidence="3">Acetylated on Lys-6 (H4K5ac) and Lys-13 (H4K12ac) during prophase I of meiosis. Phosphorylation of H2A 'Thr-119' is a prerequisite for H4 Lys-6 acetylation but not for H4 Lys-13 acetylation. Acetylated on Lys-6 and Lys-13 by the Ada2a-containing (ATAC) histone acetyltransferase complex.</text>
</comment>
<comment type="similarity">
    <text evidence="5">Belongs to the histone H4 family.</text>
</comment>
<organism>
    <name type="scientific">Drosophila yakuba</name>
    <name type="common">Fruit fly</name>
    <dbReference type="NCBI Taxonomy" id="7245"/>
    <lineage>
        <taxon>Eukaryota</taxon>
        <taxon>Metazoa</taxon>
        <taxon>Ecdysozoa</taxon>
        <taxon>Arthropoda</taxon>
        <taxon>Hexapoda</taxon>
        <taxon>Insecta</taxon>
        <taxon>Pterygota</taxon>
        <taxon>Neoptera</taxon>
        <taxon>Endopterygota</taxon>
        <taxon>Diptera</taxon>
        <taxon>Brachycera</taxon>
        <taxon>Muscomorpha</taxon>
        <taxon>Ephydroidea</taxon>
        <taxon>Drosophilidae</taxon>
        <taxon>Drosophila</taxon>
        <taxon>Sophophora</taxon>
    </lineage>
</organism>
<protein>
    <recommendedName>
        <fullName>Histone H4</fullName>
    </recommendedName>
</protein>
<gene>
    <name type="primary">His4</name>
    <name type="synonym">H4</name>
</gene>
<gene>
    <name type="ORF">GE14476</name>
</gene>
<gene>
    <name type="ORF">GE24247</name>
</gene>
<sequence>MTGRGKGGKGLGKGGAKRHRKVLRDNIQGITKPAIRRLARRGGVKRISGLIYEETRGVLKVFLENVIRDAVTYTEHAKRKTVTAMDVVYALKRQGRTLYGFGG</sequence>
<reference key="1">
    <citation type="journal article" date="2001" name="Genes Genet. Syst.">
        <title>Molecular evolutionary analysis of a histone gene repeating unit from Drosophila simulans.</title>
        <authorList>
            <person name="Tsunemoto K."/>
            <person name="Matsuo Y."/>
        </authorList>
    </citation>
    <scope>NUCLEOTIDE SEQUENCE [GENOMIC DNA] (HIS4)</scope>
</reference>
<reference key="2">
    <citation type="journal article" date="2003" name="Genes Genet. Syst.">
        <title>Divergence and heterogeneity of the histone gene repeating units in the Drosophila melanogaster species subgroup.</title>
        <authorList>
            <person name="Kakita M."/>
            <person name="Shimizu T."/>
            <person name="Emoto M."/>
            <person name="Nagai M."/>
            <person name="Takeguchi M."/>
            <person name="Hosono Y."/>
            <person name="Kume N."/>
            <person name="Ozawa T."/>
            <person name="Ueda M."/>
            <person name="Bhuiyan M.S."/>
            <person name="Matsuo Y."/>
        </authorList>
    </citation>
    <scope>NUCLEOTIDE SEQUENCE [GENOMIC DNA] (HIS4)</scope>
</reference>
<reference key="3">
    <citation type="journal article" date="2007" name="Nature">
        <title>Evolution of genes and genomes on the Drosophila phylogeny.</title>
        <authorList>
            <consortium name="Drosophila 12 genomes consortium"/>
        </authorList>
    </citation>
    <scope>NUCLEOTIDE SEQUENCE [LARGE SCALE GENOMIC DNA] (GE14476 AND GE24247)</scope>
    <source>
        <strain>Tai18E2 / Tucson 14021-0261.01</strain>
    </source>
</reference>
<accession>P84044</accession>
<accession>B4IT08</accession>
<accession>D5MP56</accession>
<accession>P02307</accession>
<accession>Q9VFH7</accession>
<name>H4_DROYA</name>
<keyword id="KW-0007">Acetylation</keyword>
<keyword id="KW-0158">Chromosome</keyword>
<keyword id="KW-0238">DNA-binding</keyword>
<keyword id="KW-0488">Methylation</keyword>
<keyword id="KW-0544">Nucleosome core</keyword>
<keyword id="KW-0539">Nucleus</keyword>
<keyword id="KW-0597">Phosphoprotein</keyword>
<dbReference type="EMBL" id="AB073635">
    <property type="protein sequence ID" value="BAC54555.1"/>
    <property type="molecule type" value="Genomic_DNA"/>
</dbReference>
<dbReference type="EMBL" id="AB073636">
    <property type="protein sequence ID" value="BAJ06135.1"/>
    <property type="molecule type" value="Genomic_DNA"/>
</dbReference>
<dbReference type="EMBL" id="AB105179">
    <property type="protein sequence ID" value="BAD02420.1"/>
    <property type="molecule type" value="Genomic_DNA"/>
</dbReference>
<dbReference type="EMBL" id="CH891624">
    <property type="protein sequence ID" value="EDW99590.1"/>
    <property type="molecule type" value="Genomic_DNA"/>
</dbReference>
<dbReference type="EMBL" id="CM000160">
    <property type="protein sequence ID" value="EDW97557.1"/>
    <property type="molecule type" value="Genomic_DNA"/>
</dbReference>
<dbReference type="SMR" id="P84044"/>
<dbReference type="EnsemblMetazoa" id="FBtr0260994">
    <property type="protein sequence ID" value="FBpp0259486"/>
    <property type="gene ID" value="FBgn0232081"/>
</dbReference>
<dbReference type="EnsemblMetazoa" id="FBtr0270765">
    <property type="protein sequence ID" value="FBpp0269257"/>
    <property type="gene ID" value="FBgn0241376"/>
</dbReference>
<dbReference type="EnsemblMetazoa" id="XM_002086084.4">
    <property type="protein sequence ID" value="XP_002086120.1"/>
    <property type="gene ID" value="LOC6539220"/>
</dbReference>
<dbReference type="EnsemblMetazoa" id="XM_002097809.3">
    <property type="protein sequence ID" value="XP_002097845.1"/>
    <property type="gene ID" value="LOC6537287"/>
</dbReference>
<dbReference type="EnsemblMetazoa" id="XM_039373186.1">
    <property type="protein sequence ID" value="XP_039229120.1"/>
    <property type="gene ID" value="LOC120321201"/>
</dbReference>
<dbReference type="EnsemblMetazoa" id="XM_039373187.1">
    <property type="protein sequence ID" value="XP_039229121.1"/>
    <property type="gene ID" value="LOC120321202"/>
</dbReference>
<dbReference type="EnsemblMetazoa" id="XM_039373407.1">
    <property type="protein sequence ID" value="XP_039229341.1"/>
    <property type="gene ID" value="LOC26535638"/>
</dbReference>
<dbReference type="EnsemblMetazoa" id="XM_039373408.1">
    <property type="protein sequence ID" value="XP_039229342.1"/>
    <property type="gene ID" value="LOC120321245"/>
</dbReference>
<dbReference type="EnsemblMetazoa" id="XM_039377268.2">
    <property type="protein sequence ID" value="XP_039233202.1"/>
    <property type="gene ID" value="LOC120322211"/>
</dbReference>
<dbReference type="EnsemblMetazoa" id="XM_039377269.2">
    <property type="protein sequence ID" value="XP_039233203.1"/>
    <property type="gene ID" value="LOC120322212"/>
</dbReference>
<dbReference type="EnsemblMetazoa" id="XM_039377270.2">
    <property type="protein sequence ID" value="XP_039233204.1"/>
    <property type="gene ID" value="LOC120322213"/>
</dbReference>
<dbReference type="EnsemblMetazoa" id="XM_039377271.2">
    <property type="protein sequence ID" value="XP_039233205.1"/>
    <property type="gene ID" value="LOC120322214"/>
</dbReference>
<dbReference type="EnsemblMetazoa" id="XM_039377272.2">
    <property type="protein sequence ID" value="XP_039233206.1"/>
    <property type="gene ID" value="LOC120322215"/>
</dbReference>
<dbReference type="EnsemblMetazoa" id="XM_039377273.2">
    <property type="protein sequence ID" value="XP_039233207.1"/>
    <property type="gene ID" value="LOC120322217"/>
</dbReference>
<dbReference type="EnsemblMetazoa" id="XM_039377274.2">
    <property type="protein sequence ID" value="XP_039233208.1"/>
    <property type="gene ID" value="LOC120322218"/>
</dbReference>
<dbReference type="EnsemblMetazoa" id="XM_039377275.2">
    <property type="protein sequence ID" value="XP_039233209.1"/>
    <property type="gene ID" value="LOC120322219"/>
</dbReference>
<dbReference type="EnsemblMetazoa" id="XM_039377276.2">
    <property type="protein sequence ID" value="XP_039233210.1"/>
    <property type="gene ID" value="LOC120322220"/>
</dbReference>
<dbReference type="EnsemblMetazoa" id="XM_039377277.2">
    <property type="protein sequence ID" value="XP_039233211.1"/>
    <property type="gene ID" value="LOC120322221"/>
</dbReference>
<dbReference type="EnsemblMetazoa" id="XM_039377278.2">
    <property type="protein sequence ID" value="XP_039233212.1"/>
    <property type="gene ID" value="LOC120322222"/>
</dbReference>
<dbReference type="EnsemblMetazoa" id="XM_039377279.2">
    <property type="protein sequence ID" value="XP_039233213.1"/>
    <property type="gene ID" value="LOC120322223"/>
</dbReference>
<dbReference type="EnsemblMetazoa" id="XM_039377281.1">
    <property type="protein sequence ID" value="XP_039233215.1"/>
    <property type="gene ID" value="LOC26535724"/>
</dbReference>
<dbReference type="GeneID" id="6537287"/>
<dbReference type="GeneID" id="6539220"/>
<dbReference type="KEGG" id="dya:Dyak_GE14476"/>
<dbReference type="KEGG" id="dya:Dyak_GE24247"/>
<dbReference type="CTD" id="41773"/>
<dbReference type="eggNOG" id="KOG3467">
    <property type="taxonomic scope" value="Eukaryota"/>
</dbReference>
<dbReference type="HOGENOM" id="CLU_109117_2_3_1"/>
<dbReference type="OMA" id="QKEHING"/>
<dbReference type="OrthoDB" id="8179904at2759"/>
<dbReference type="PhylomeDB" id="P84044"/>
<dbReference type="Proteomes" id="UP000002282">
    <property type="component" value="Chromosome 3R"/>
</dbReference>
<dbReference type="Proteomes" id="UP000002282">
    <property type="component" value="Unassembled WGS sequence"/>
</dbReference>
<dbReference type="GO" id="GO:0000228">
    <property type="term" value="C:nuclear chromosome"/>
    <property type="evidence" value="ECO:0007669"/>
    <property type="project" value="EnsemblMetazoa"/>
</dbReference>
<dbReference type="GO" id="GO:0000786">
    <property type="term" value="C:nucleosome"/>
    <property type="evidence" value="ECO:0000250"/>
    <property type="project" value="UniProtKB"/>
</dbReference>
<dbReference type="GO" id="GO:0035059">
    <property type="term" value="C:RCAF complex"/>
    <property type="evidence" value="ECO:0007669"/>
    <property type="project" value="EnsemblMetazoa"/>
</dbReference>
<dbReference type="GO" id="GO:0003677">
    <property type="term" value="F:DNA binding"/>
    <property type="evidence" value="ECO:0000250"/>
    <property type="project" value="UniProtKB"/>
</dbReference>
<dbReference type="GO" id="GO:0046982">
    <property type="term" value="F:protein heterodimerization activity"/>
    <property type="evidence" value="ECO:0007669"/>
    <property type="project" value="InterPro"/>
</dbReference>
<dbReference type="GO" id="GO:0030527">
    <property type="term" value="F:structural constituent of chromatin"/>
    <property type="evidence" value="ECO:0007669"/>
    <property type="project" value="InterPro"/>
</dbReference>
<dbReference type="GO" id="GO:0006334">
    <property type="term" value="P:nucleosome assembly"/>
    <property type="evidence" value="ECO:0000250"/>
    <property type="project" value="UniProtKB"/>
</dbReference>
<dbReference type="CDD" id="cd22912">
    <property type="entry name" value="HFD_H4"/>
    <property type="match status" value="1"/>
</dbReference>
<dbReference type="FunFam" id="1.10.20.10:FF:000002">
    <property type="entry name" value="Histone H4"/>
    <property type="match status" value="1"/>
</dbReference>
<dbReference type="Gene3D" id="1.10.20.10">
    <property type="entry name" value="Histone, subunit A"/>
    <property type="match status" value="1"/>
</dbReference>
<dbReference type="InterPro" id="IPR035425">
    <property type="entry name" value="CENP-T/H4_C"/>
</dbReference>
<dbReference type="InterPro" id="IPR009072">
    <property type="entry name" value="Histone-fold"/>
</dbReference>
<dbReference type="InterPro" id="IPR001951">
    <property type="entry name" value="Histone_H4"/>
</dbReference>
<dbReference type="InterPro" id="IPR019809">
    <property type="entry name" value="Histone_H4_CS"/>
</dbReference>
<dbReference type="InterPro" id="IPR004823">
    <property type="entry name" value="TAF_TATA-bd_Histone-like_dom"/>
</dbReference>
<dbReference type="PANTHER" id="PTHR10484">
    <property type="entry name" value="HISTONE H4"/>
    <property type="match status" value="1"/>
</dbReference>
<dbReference type="Pfam" id="PF15511">
    <property type="entry name" value="CENP-T_C"/>
    <property type="match status" value="1"/>
</dbReference>
<dbReference type="PRINTS" id="PR00623">
    <property type="entry name" value="HISTONEH4"/>
</dbReference>
<dbReference type="SMART" id="SM00417">
    <property type="entry name" value="H4"/>
    <property type="match status" value="1"/>
</dbReference>
<dbReference type="SMART" id="SM00803">
    <property type="entry name" value="TAF"/>
    <property type="match status" value="1"/>
</dbReference>
<dbReference type="SUPFAM" id="SSF47113">
    <property type="entry name" value="Histone-fold"/>
    <property type="match status" value="1"/>
</dbReference>
<dbReference type="PROSITE" id="PS00047">
    <property type="entry name" value="HISTONE_H4"/>
    <property type="match status" value="1"/>
</dbReference>